<protein>
    <recommendedName>
        <fullName evidence="1">Glutamine synthetase</fullName>
        <shortName evidence="1">GS</shortName>
        <ecNumber evidence="1">6.3.1.2</ecNumber>
    </recommendedName>
    <alternativeName>
        <fullName evidence="8">Glutamate--ammonia ligase</fullName>
    </alternativeName>
    <alternativeName>
        <fullName evidence="1">Glutamine synthetase I beta</fullName>
        <shortName evidence="1">GSI beta</shortName>
    </alternativeName>
</protein>
<organism>
    <name type="scientific">Bradyrhizobium diazoefficiens (strain JCM 10833 / BCRC 13528 / IAM 13628 / NBRC 14792 / USDA 110)</name>
    <dbReference type="NCBI Taxonomy" id="224911"/>
    <lineage>
        <taxon>Bacteria</taxon>
        <taxon>Pseudomonadati</taxon>
        <taxon>Pseudomonadota</taxon>
        <taxon>Alphaproteobacteria</taxon>
        <taxon>Hyphomicrobiales</taxon>
        <taxon>Nitrobacteraceae</taxon>
        <taxon>Bradyrhizobium</taxon>
    </lineage>
</organism>
<accession>P05457</accession>
<comment type="function">
    <text evidence="1">Catalyzes the ATP-dependent biosynthesis of glutamine from glutamate and ammonia.</text>
</comment>
<comment type="catalytic activity">
    <reaction evidence="1">
        <text>L-glutamate + NH4(+) + ATP = L-glutamine + ADP + phosphate + H(+)</text>
        <dbReference type="Rhea" id="RHEA:16169"/>
        <dbReference type="ChEBI" id="CHEBI:15378"/>
        <dbReference type="ChEBI" id="CHEBI:28938"/>
        <dbReference type="ChEBI" id="CHEBI:29985"/>
        <dbReference type="ChEBI" id="CHEBI:30616"/>
        <dbReference type="ChEBI" id="CHEBI:43474"/>
        <dbReference type="ChEBI" id="CHEBI:58359"/>
        <dbReference type="ChEBI" id="CHEBI:456216"/>
        <dbReference type="EC" id="6.3.1.2"/>
    </reaction>
</comment>
<comment type="cofactor">
    <cofactor evidence="4">
        <name>Mg(2+)</name>
        <dbReference type="ChEBI" id="CHEBI:18420"/>
    </cofactor>
    <text evidence="4">Binds 2 Mg(2+) ions per subunit.</text>
</comment>
<comment type="activity regulation">
    <text evidence="5">The activity of this enzyme could be controlled by adenylation under conditions of abundant glutamine.</text>
</comment>
<comment type="subunit">
    <text evidence="1">Oligomer of 12 subunits arranged in the form of two hexameric ring.</text>
</comment>
<comment type="subcellular location">
    <subcellularLocation>
        <location evidence="4">Cytoplasm</location>
    </subcellularLocation>
</comment>
<comment type="miscellaneous">
    <text evidence="8">Two forms of glutamine synthetase (GSI and GSII) can be found in this nitrogen fixing bacteria, GSI is a typical prokaryotic glutamine synthetase whereas GSII is similar to the eukaryotic enzyme.</text>
</comment>
<comment type="similarity">
    <text evidence="8">Belongs to the glutamine synthetase family.</text>
</comment>
<reference key="1">
    <citation type="journal article" date="2002" name="DNA Res.">
        <title>Complete genomic sequence of nitrogen-fixing symbiotic bacterium Bradyrhizobium japonicum USDA110.</title>
        <authorList>
            <person name="Kaneko T."/>
            <person name="Nakamura Y."/>
            <person name="Sato S."/>
            <person name="Minamisawa K."/>
            <person name="Uchiumi T."/>
            <person name="Sasamoto S."/>
            <person name="Watanabe A."/>
            <person name="Idesawa K."/>
            <person name="Iriguchi M."/>
            <person name="Kawashima K."/>
            <person name="Kohara M."/>
            <person name="Matsumoto M."/>
            <person name="Shimpo S."/>
            <person name="Tsuruoka H."/>
            <person name="Wada T."/>
            <person name="Yamada M."/>
            <person name="Tabata S."/>
        </authorList>
    </citation>
    <scope>NUCLEOTIDE SEQUENCE [LARGE SCALE GENOMIC DNA]</scope>
    <source>
        <strain>JCM 10833 / BCRC 13528 / IAM 13628 / NBRC 14792 / USDA 110</strain>
    </source>
</reference>
<reference key="2">
    <citation type="journal article" date="1985" name="J. Bacteriol.">
        <title>Characterization of the gene encoding glutamine synthetase I (glnA) from Bradyrhizobium japonicum.</title>
        <authorList>
            <person name="Carlson T.A."/>
            <person name="Guerinot M.L."/>
            <person name="Chelm B.K."/>
        </authorList>
    </citation>
    <scope>NUCLEOTIDE SEQUENCE [GENOMIC DNA] OF 1-72</scope>
</reference>
<reference key="3">
    <citation type="journal article" date="1989" name="J. Bacteriol.">
        <title>Bradyrhizobium japonicum glnB, a putative nitrogen-regulatory gene, is regulated by NtrC at tandem promoters.</title>
        <authorList>
            <person name="Martin G.B."/>
            <person name="Thomashow M.F."/>
            <person name="Chelm B.K."/>
        </authorList>
    </citation>
    <scope>NUCLEOTIDE SEQUENCE [GENOMIC DNA] OF 1-21</scope>
</reference>
<gene>
    <name evidence="1" type="primary">glnA</name>
    <name type="synonym">glnI</name>
    <name type="ordered locus">blr4949</name>
</gene>
<name>GLN1B_BRADU</name>
<feature type="chain" id="PRO_0000153219" description="Glutamine synthetase">
    <location>
        <begin position="1"/>
        <end position="469"/>
    </location>
</feature>
<feature type="domain" description="GS beta-grasp" evidence="6">
    <location>
        <begin position="14"/>
        <end position="98"/>
    </location>
</feature>
<feature type="domain" description="GS catalytic" evidence="7">
    <location>
        <begin position="106"/>
        <end position="469"/>
    </location>
</feature>
<feature type="binding site" evidence="4">
    <location>
        <position position="131"/>
    </location>
    <ligand>
        <name>Mg(2+)</name>
        <dbReference type="ChEBI" id="CHEBI:18420"/>
        <label>1</label>
    </ligand>
</feature>
<feature type="binding site" evidence="4">
    <location>
        <position position="133"/>
    </location>
    <ligand>
        <name>Mg(2+)</name>
        <dbReference type="ChEBI" id="CHEBI:18420"/>
        <label>2</label>
    </ligand>
</feature>
<feature type="binding site" evidence="1">
    <location>
        <position position="209"/>
    </location>
    <ligand>
        <name>ATP</name>
        <dbReference type="ChEBI" id="CHEBI:30616"/>
    </ligand>
</feature>
<feature type="binding site" evidence="4">
    <location>
        <position position="214"/>
    </location>
    <ligand>
        <name>Mg(2+)</name>
        <dbReference type="ChEBI" id="CHEBI:18420"/>
        <label>2</label>
    </ligand>
</feature>
<feature type="binding site" evidence="4">
    <location>
        <position position="221"/>
    </location>
    <ligand>
        <name>Mg(2+)</name>
        <dbReference type="ChEBI" id="CHEBI:18420"/>
        <label>2</label>
    </ligand>
</feature>
<feature type="binding site" evidence="1">
    <location>
        <begin position="265"/>
        <end position="266"/>
    </location>
    <ligand>
        <name>L-glutamate</name>
        <dbReference type="ChEBI" id="CHEBI:29985"/>
    </ligand>
</feature>
<feature type="binding site" evidence="2">
    <location>
        <position position="266"/>
    </location>
    <ligand>
        <name>L-glutamate</name>
        <dbReference type="ChEBI" id="CHEBI:29985"/>
    </ligand>
</feature>
<feature type="binding site" evidence="4">
    <location>
        <position position="270"/>
    </location>
    <ligand>
        <name>Mg(2+)</name>
        <dbReference type="ChEBI" id="CHEBI:18420"/>
        <label>1</label>
    </ligand>
</feature>
<feature type="binding site" evidence="1">
    <location>
        <begin position="272"/>
        <end position="274"/>
    </location>
    <ligand>
        <name>ATP</name>
        <dbReference type="ChEBI" id="CHEBI:30616"/>
    </ligand>
</feature>
<feature type="binding site" evidence="3">
    <location>
        <position position="274"/>
    </location>
    <ligand>
        <name>ATP</name>
        <dbReference type="ChEBI" id="CHEBI:30616"/>
    </ligand>
</feature>
<feature type="binding site" evidence="1">
    <location>
        <position position="322"/>
    </location>
    <ligand>
        <name>L-glutamate</name>
        <dbReference type="ChEBI" id="CHEBI:29985"/>
    </ligand>
</feature>
<feature type="binding site" evidence="1">
    <location>
        <position position="328"/>
    </location>
    <ligand>
        <name>L-glutamate</name>
        <dbReference type="ChEBI" id="CHEBI:29985"/>
    </ligand>
</feature>
<feature type="binding site" evidence="4">
    <location>
        <position position="340"/>
    </location>
    <ligand>
        <name>ATP</name>
        <dbReference type="ChEBI" id="CHEBI:30616"/>
    </ligand>
</feature>
<feature type="binding site" evidence="4">
    <location>
        <position position="340"/>
    </location>
    <ligand>
        <name>L-glutamate</name>
        <dbReference type="ChEBI" id="CHEBI:29985"/>
    </ligand>
</feature>
<feature type="binding site" evidence="4">
    <location>
        <position position="345"/>
    </location>
    <ligand>
        <name>ATP</name>
        <dbReference type="ChEBI" id="CHEBI:30616"/>
    </ligand>
</feature>
<feature type="binding site" evidence="3">
    <location>
        <position position="353"/>
    </location>
    <ligand>
        <name>ATP</name>
        <dbReference type="ChEBI" id="CHEBI:30616"/>
    </ligand>
</feature>
<feature type="binding site" evidence="4">
    <location>
        <position position="358"/>
    </location>
    <ligand>
        <name>Mg(2+)</name>
        <dbReference type="ChEBI" id="CHEBI:18420"/>
        <label>1</label>
    </ligand>
</feature>
<feature type="binding site" evidence="1">
    <location>
        <position position="360"/>
    </location>
    <ligand>
        <name>L-glutamate</name>
        <dbReference type="ChEBI" id="CHEBI:29985"/>
    </ligand>
</feature>
<feature type="modified residue" description="O-AMP-tyrosine" evidence="4">
    <location>
        <position position="398"/>
    </location>
</feature>
<keyword id="KW-0067">ATP-binding</keyword>
<keyword id="KW-0963">Cytoplasm</keyword>
<keyword id="KW-0436">Ligase</keyword>
<keyword id="KW-0460">Magnesium</keyword>
<keyword id="KW-0479">Metal-binding</keyword>
<keyword id="KW-0535">Nitrogen fixation</keyword>
<keyword id="KW-0547">Nucleotide-binding</keyword>
<keyword id="KW-0597">Phosphoprotein</keyword>
<keyword id="KW-1185">Reference proteome</keyword>
<dbReference type="EC" id="6.3.1.2" evidence="1"/>
<dbReference type="EMBL" id="BA000040">
    <property type="protein sequence ID" value="BAC50214.1"/>
    <property type="molecule type" value="Genomic_DNA"/>
</dbReference>
<dbReference type="EMBL" id="M10926">
    <property type="protein sequence ID" value="AAA26213.1"/>
    <property type="molecule type" value="Genomic_DNA"/>
</dbReference>
<dbReference type="EMBL" id="M26753">
    <property type="protein sequence ID" value="AAA26215.1"/>
    <property type="molecule type" value="Genomic_DNA"/>
</dbReference>
<dbReference type="PIR" id="B33600">
    <property type="entry name" value="B33600"/>
</dbReference>
<dbReference type="RefSeq" id="NP_771589.1">
    <property type="nucleotide sequence ID" value="NC_004463.1"/>
</dbReference>
<dbReference type="RefSeq" id="WP_011087712.1">
    <property type="nucleotide sequence ID" value="NC_004463.1"/>
</dbReference>
<dbReference type="SMR" id="P05457"/>
<dbReference type="FunCoup" id="P05457">
    <property type="interactions" value="698"/>
</dbReference>
<dbReference type="STRING" id="224911.AAV28_22100"/>
<dbReference type="EnsemblBacteria" id="BAC50214">
    <property type="protein sequence ID" value="BAC50214"/>
    <property type="gene ID" value="BAC50214"/>
</dbReference>
<dbReference type="GeneID" id="46491958"/>
<dbReference type="KEGG" id="bja:blr4949"/>
<dbReference type="PATRIC" id="fig|224911.44.peg.4803"/>
<dbReference type="eggNOG" id="COG0174">
    <property type="taxonomic scope" value="Bacteria"/>
</dbReference>
<dbReference type="HOGENOM" id="CLU_017290_1_2_5"/>
<dbReference type="InParanoid" id="P05457"/>
<dbReference type="OrthoDB" id="9807095at2"/>
<dbReference type="PhylomeDB" id="P05457"/>
<dbReference type="Proteomes" id="UP000002526">
    <property type="component" value="Chromosome"/>
</dbReference>
<dbReference type="GO" id="GO:0005737">
    <property type="term" value="C:cytoplasm"/>
    <property type="evidence" value="ECO:0000318"/>
    <property type="project" value="GO_Central"/>
</dbReference>
<dbReference type="GO" id="GO:0016020">
    <property type="term" value="C:membrane"/>
    <property type="evidence" value="ECO:0000318"/>
    <property type="project" value="GO_Central"/>
</dbReference>
<dbReference type="GO" id="GO:0005524">
    <property type="term" value="F:ATP binding"/>
    <property type="evidence" value="ECO:0007669"/>
    <property type="project" value="UniProtKB-KW"/>
</dbReference>
<dbReference type="GO" id="GO:0004356">
    <property type="term" value="F:glutamine synthetase activity"/>
    <property type="evidence" value="ECO:0000318"/>
    <property type="project" value="GO_Central"/>
</dbReference>
<dbReference type="GO" id="GO:0046872">
    <property type="term" value="F:metal ion binding"/>
    <property type="evidence" value="ECO:0007669"/>
    <property type="project" value="UniProtKB-KW"/>
</dbReference>
<dbReference type="GO" id="GO:0006542">
    <property type="term" value="P:glutamine biosynthetic process"/>
    <property type="evidence" value="ECO:0000318"/>
    <property type="project" value="GO_Central"/>
</dbReference>
<dbReference type="GO" id="GO:0009399">
    <property type="term" value="P:nitrogen fixation"/>
    <property type="evidence" value="ECO:0007669"/>
    <property type="project" value="UniProtKB-KW"/>
</dbReference>
<dbReference type="GO" id="GO:0019740">
    <property type="term" value="P:nitrogen utilization"/>
    <property type="evidence" value="ECO:0000318"/>
    <property type="project" value="GO_Central"/>
</dbReference>
<dbReference type="FunFam" id="3.10.20.70:FF:000001">
    <property type="entry name" value="Glutamine synthetase"/>
    <property type="match status" value="1"/>
</dbReference>
<dbReference type="FunFam" id="3.30.590.10:FF:000001">
    <property type="entry name" value="Glutamine synthetase"/>
    <property type="match status" value="1"/>
</dbReference>
<dbReference type="Gene3D" id="3.10.20.70">
    <property type="entry name" value="Glutamine synthetase, N-terminal domain"/>
    <property type="match status" value="1"/>
</dbReference>
<dbReference type="Gene3D" id="3.30.590.10">
    <property type="entry name" value="Glutamine synthetase/guanido kinase, catalytic domain"/>
    <property type="match status" value="1"/>
</dbReference>
<dbReference type="InterPro" id="IPR008147">
    <property type="entry name" value="Gln_synt_N"/>
</dbReference>
<dbReference type="InterPro" id="IPR036651">
    <property type="entry name" value="Gln_synt_N_sf"/>
</dbReference>
<dbReference type="InterPro" id="IPR014746">
    <property type="entry name" value="Gln_synth/guanido_kin_cat_dom"/>
</dbReference>
<dbReference type="InterPro" id="IPR008146">
    <property type="entry name" value="Gln_synth_cat_dom"/>
</dbReference>
<dbReference type="InterPro" id="IPR027303">
    <property type="entry name" value="Gln_synth_gly_rich_site"/>
</dbReference>
<dbReference type="InterPro" id="IPR004809">
    <property type="entry name" value="Gln_synth_I"/>
</dbReference>
<dbReference type="InterPro" id="IPR001637">
    <property type="entry name" value="Gln_synth_I_adenylation_site"/>
</dbReference>
<dbReference type="InterPro" id="IPR027302">
    <property type="entry name" value="Gln_synth_N_conserv_site"/>
</dbReference>
<dbReference type="NCBIfam" id="TIGR00653">
    <property type="entry name" value="GlnA"/>
    <property type="match status" value="1"/>
</dbReference>
<dbReference type="PANTHER" id="PTHR43407">
    <property type="entry name" value="GLUTAMINE SYNTHETASE"/>
    <property type="match status" value="1"/>
</dbReference>
<dbReference type="PANTHER" id="PTHR43407:SF2">
    <property type="entry name" value="GLUTAMINE SYNTHETASE"/>
    <property type="match status" value="1"/>
</dbReference>
<dbReference type="Pfam" id="PF00120">
    <property type="entry name" value="Gln-synt_C"/>
    <property type="match status" value="1"/>
</dbReference>
<dbReference type="Pfam" id="PF03951">
    <property type="entry name" value="Gln-synt_N"/>
    <property type="match status" value="1"/>
</dbReference>
<dbReference type="SMART" id="SM01230">
    <property type="entry name" value="Gln-synt_C"/>
    <property type="match status" value="1"/>
</dbReference>
<dbReference type="SUPFAM" id="SSF54368">
    <property type="entry name" value="Glutamine synthetase, N-terminal domain"/>
    <property type="match status" value="1"/>
</dbReference>
<dbReference type="SUPFAM" id="SSF55931">
    <property type="entry name" value="Glutamine synthetase/guanido kinase"/>
    <property type="match status" value="1"/>
</dbReference>
<dbReference type="PROSITE" id="PS00180">
    <property type="entry name" value="GLNA_1"/>
    <property type="match status" value="1"/>
</dbReference>
<dbReference type="PROSITE" id="PS00182">
    <property type="entry name" value="GLNA_ADENYLATION"/>
    <property type="match status" value="1"/>
</dbReference>
<dbReference type="PROSITE" id="PS00181">
    <property type="entry name" value="GLNA_ATP"/>
    <property type="match status" value="1"/>
</dbReference>
<dbReference type="PROSITE" id="PS51986">
    <property type="entry name" value="GS_BETA_GRASP"/>
    <property type="match status" value="1"/>
</dbReference>
<dbReference type="PROSITE" id="PS51987">
    <property type="entry name" value="GS_CATALYTIC"/>
    <property type="match status" value="1"/>
</dbReference>
<evidence type="ECO:0000250" key="1">
    <source>
        <dbReference type="UniProtKB" id="P0A1P6"/>
    </source>
</evidence>
<evidence type="ECO:0000250" key="2">
    <source>
        <dbReference type="UniProtKB" id="P12425"/>
    </source>
</evidence>
<evidence type="ECO:0000250" key="3">
    <source>
        <dbReference type="UniProtKB" id="P77961"/>
    </source>
</evidence>
<evidence type="ECO:0000250" key="4">
    <source>
        <dbReference type="UniProtKB" id="P9WN39"/>
    </source>
</evidence>
<evidence type="ECO:0000250" key="5">
    <source>
        <dbReference type="UniProtKB" id="Q3V5W6"/>
    </source>
</evidence>
<evidence type="ECO:0000255" key="6">
    <source>
        <dbReference type="PROSITE-ProRule" id="PRU01330"/>
    </source>
</evidence>
<evidence type="ECO:0000255" key="7">
    <source>
        <dbReference type="PROSITE-ProRule" id="PRU01331"/>
    </source>
</evidence>
<evidence type="ECO:0000305" key="8"/>
<sequence>MKTAKDVLKSIKDNDVKYVDLRFTDPRGKWQHVTFDVSMIDEDIFAEGTMFDGSSIAGWKAINESDMCLMPDPVTATIDPFFAETTMVITCDVLEPTTGEPYNRDPRGIAKKAEAMVKSMGVGDTVFVGPEAEFFVFDDVRFSSSPYNTGFRLDSSELPTNTDTEYEGGNLGHRVRTKGGYFPVPPQDSVQDMRSEMLGAMAKMGVKVEKHHHEVASAQHELGMKFDTLTLMADHLQIYKYCIHQVAHIYGKTATFMPKPVYGDNGSGMHVHQSIWKDGKPVFAGNKYADLSETCLHYIGGIIKHAKAINAFTNPSTNSYKRLVPGYEAPVLLAYSARNRSASCRIPYTASPKAKRVEVRFPDPLANPYLGFAAMLMAGLDGIKNKIDPGPAMDKDLYDLPKEELKQIPTVCGSLREALENLDKDRAFLKAGGVFDDDFIDSYIELKMTEVERFEMTPHPVEFDMYYSG</sequence>
<proteinExistence type="inferred from homology"/>